<comment type="function">
    <text evidence="1">Activates KDO (a required 8-carbon sugar) for incorporation into bacterial lipopolysaccharide in Gram-negative bacteria.</text>
</comment>
<comment type="catalytic activity">
    <reaction evidence="1">
        <text>3-deoxy-alpha-D-manno-oct-2-ulosonate + CTP = CMP-3-deoxy-beta-D-manno-octulosonate + diphosphate</text>
        <dbReference type="Rhea" id="RHEA:23448"/>
        <dbReference type="ChEBI" id="CHEBI:33019"/>
        <dbReference type="ChEBI" id="CHEBI:37563"/>
        <dbReference type="ChEBI" id="CHEBI:85986"/>
        <dbReference type="ChEBI" id="CHEBI:85987"/>
        <dbReference type="EC" id="2.7.7.38"/>
    </reaction>
</comment>
<comment type="pathway">
    <text evidence="1">Nucleotide-sugar biosynthesis; CMP-3-deoxy-D-manno-octulosonate biosynthesis; CMP-3-deoxy-D-manno-octulosonate from 3-deoxy-D-manno-octulosonate and CTP: step 1/1.</text>
</comment>
<comment type="pathway">
    <text evidence="1">Bacterial outer membrane biogenesis; lipopolysaccharide biosynthesis.</text>
</comment>
<comment type="subcellular location">
    <subcellularLocation>
        <location evidence="1">Cytoplasm</location>
    </subcellularLocation>
</comment>
<comment type="similarity">
    <text evidence="1">Belongs to the KdsB family.</text>
</comment>
<organism>
    <name type="scientific">Polynucleobacter asymbioticus (strain DSM 18221 / CIP 109841 / QLW-P1DMWA-1)</name>
    <name type="common">Polynucleobacter necessarius subsp. asymbioticus</name>
    <dbReference type="NCBI Taxonomy" id="312153"/>
    <lineage>
        <taxon>Bacteria</taxon>
        <taxon>Pseudomonadati</taxon>
        <taxon>Pseudomonadota</taxon>
        <taxon>Betaproteobacteria</taxon>
        <taxon>Burkholderiales</taxon>
        <taxon>Burkholderiaceae</taxon>
        <taxon>Polynucleobacter</taxon>
    </lineage>
</organism>
<evidence type="ECO:0000255" key="1">
    <source>
        <dbReference type="HAMAP-Rule" id="MF_00057"/>
    </source>
</evidence>
<dbReference type="EC" id="2.7.7.38" evidence="1"/>
<dbReference type="EMBL" id="CP000655">
    <property type="protein sequence ID" value="ABP33503.1"/>
    <property type="molecule type" value="Genomic_DNA"/>
</dbReference>
<dbReference type="RefSeq" id="WP_011902128.1">
    <property type="nucleotide sequence ID" value="NC_009379.1"/>
</dbReference>
<dbReference type="SMR" id="A4SVI9"/>
<dbReference type="GeneID" id="31480632"/>
<dbReference type="KEGG" id="pnu:Pnuc_0282"/>
<dbReference type="eggNOG" id="COG1212">
    <property type="taxonomic scope" value="Bacteria"/>
</dbReference>
<dbReference type="HOGENOM" id="CLU_065038_1_0_4"/>
<dbReference type="UniPathway" id="UPA00030"/>
<dbReference type="UniPathway" id="UPA00358">
    <property type="reaction ID" value="UER00476"/>
</dbReference>
<dbReference type="Proteomes" id="UP000000231">
    <property type="component" value="Chromosome"/>
</dbReference>
<dbReference type="GO" id="GO:0005829">
    <property type="term" value="C:cytosol"/>
    <property type="evidence" value="ECO:0007669"/>
    <property type="project" value="TreeGrafter"/>
</dbReference>
<dbReference type="GO" id="GO:0008690">
    <property type="term" value="F:3-deoxy-manno-octulosonate cytidylyltransferase activity"/>
    <property type="evidence" value="ECO:0007669"/>
    <property type="project" value="UniProtKB-UniRule"/>
</dbReference>
<dbReference type="GO" id="GO:0033468">
    <property type="term" value="P:CMP-keto-3-deoxy-D-manno-octulosonic acid biosynthetic process"/>
    <property type="evidence" value="ECO:0007669"/>
    <property type="project" value="UniProtKB-UniRule"/>
</dbReference>
<dbReference type="GO" id="GO:0009103">
    <property type="term" value="P:lipopolysaccharide biosynthetic process"/>
    <property type="evidence" value="ECO:0007669"/>
    <property type="project" value="UniProtKB-UniRule"/>
</dbReference>
<dbReference type="CDD" id="cd02517">
    <property type="entry name" value="CMP-KDO-Synthetase"/>
    <property type="match status" value="1"/>
</dbReference>
<dbReference type="FunFam" id="3.90.550.10:FF:000011">
    <property type="entry name" value="3-deoxy-manno-octulosonate cytidylyltransferase"/>
    <property type="match status" value="1"/>
</dbReference>
<dbReference type="Gene3D" id="3.90.550.10">
    <property type="entry name" value="Spore Coat Polysaccharide Biosynthesis Protein SpsA, Chain A"/>
    <property type="match status" value="1"/>
</dbReference>
<dbReference type="HAMAP" id="MF_00057">
    <property type="entry name" value="KdsB"/>
    <property type="match status" value="1"/>
</dbReference>
<dbReference type="InterPro" id="IPR003329">
    <property type="entry name" value="Cytidylyl_trans"/>
</dbReference>
<dbReference type="InterPro" id="IPR004528">
    <property type="entry name" value="KdsB"/>
</dbReference>
<dbReference type="InterPro" id="IPR029044">
    <property type="entry name" value="Nucleotide-diphossugar_trans"/>
</dbReference>
<dbReference type="NCBIfam" id="TIGR00466">
    <property type="entry name" value="kdsB"/>
    <property type="match status" value="1"/>
</dbReference>
<dbReference type="NCBIfam" id="NF003952">
    <property type="entry name" value="PRK05450.1-5"/>
    <property type="match status" value="1"/>
</dbReference>
<dbReference type="NCBIfam" id="NF009905">
    <property type="entry name" value="PRK13368.1"/>
    <property type="match status" value="1"/>
</dbReference>
<dbReference type="PANTHER" id="PTHR42866">
    <property type="entry name" value="3-DEOXY-MANNO-OCTULOSONATE CYTIDYLYLTRANSFERASE"/>
    <property type="match status" value="1"/>
</dbReference>
<dbReference type="PANTHER" id="PTHR42866:SF2">
    <property type="entry name" value="3-DEOXY-MANNO-OCTULOSONATE CYTIDYLYLTRANSFERASE, MITOCHONDRIAL"/>
    <property type="match status" value="1"/>
</dbReference>
<dbReference type="Pfam" id="PF02348">
    <property type="entry name" value="CTP_transf_3"/>
    <property type="match status" value="1"/>
</dbReference>
<dbReference type="SUPFAM" id="SSF53448">
    <property type="entry name" value="Nucleotide-diphospho-sugar transferases"/>
    <property type="match status" value="1"/>
</dbReference>
<keyword id="KW-0963">Cytoplasm</keyword>
<keyword id="KW-0448">Lipopolysaccharide biosynthesis</keyword>
<keyword id="KW-0548">Nucleotidyltransferase</keyword>
<keyword id="KW-1185">Reference proteome</keyword>
<keyword id="KW-0808">Transferase</keyword>
<name>KDSB_POLAQ</name>
<protein>
    <recommendedName>
        <fullName evidence="1">3-deoxy-manno-octulosonate cytidylyltransferase</fullName>
        <ecNumber evidence="1">2.7.7.38</ecNumber>
    </recommendedName>
    <alternativeName>
        <fullName evidence="1">CMP-2-keto-3-deoxyoctulosonic acid synthase</fullName>
        <shortName evidence="1">CKS</shortName>
        <shortName evidence="1">CMP-KDO synthase</shortName>
    </alternativeName>
</protein>
<sequence length="254" mass="27777">MSTAPKAPDFLVVIPARLGSTRLPRKPLADIGGKPMVVRVAERAKQSLAHSVIVATDSPEIQAACDEHRIECLLTSPDHPTGTDRIAEVAQLLKLPSNALVVNVQGDEPLIPPELINQVAQTLAEHPQCAISTVAVLISEPSEIDNSNVVKVVLNREGEALYFSRAPIPYVRDPQELIKTEHLRHLGIYAYRADFLQAYTRLDPAPPEQAEALEQLRALWNGYRIAVHTAPEAPPAGVDTLDDLERVRQLLGNT</sequence>
<feature type="chain" id="PRO_0000370117" description="3-deoxy-manno-octulosonate cytidylyltransferase">
    <location>
        <begin position="1"/>
        <end position="254"/>
    </location>
</feature>
<accession>A4SVI9</accession>
<proteinExistence type="inferred from homology"/>
<gene>
    <name evidence="1" type="primary">kdsB</name>
    <name type="ordered locus">Pnuc_0282</name>
</gene>
<reference key="1">
    <citation type="journal article" date="2012" name="Stand. Genomic Sci.">
        <title>Complete genome sequence of Polynucleobacter necessarius subsp. asymbioticus type strain (QLW-P1DMWA-1(T)).</title>
        <authorList>
            <person name="Meincke L."/>
            <person name="Copeland A."/>
            <person name="Lapidus A."/>
            <person name="Lucas S."/>
            <person name="Berry K.W."/>
            <person name="Del Rio T.G."/>
            <person name="Hammon N."/>
            <person name="Dalin E."/>
            <person name="Tice H."/>
            <person name="Pitluck S."/>
            <person name="Richardson P."/>
            <person name="Bruce D."/>
            <person name="Goodwin L."/>
            <person name="Han C."/>
            <person name="Tapia R."/>
            <person name="Detter J.C."/>
            <person name="Schmutz J."/>
            <person name="Brettin T."/>
            <person name="Larimer F."/>
            <person name="Land M."/>
            <person name="Hauser L."/>
            <person name="Kyrpides N.C."/>
            <person name="Ivanova N."/>
            <person name="Goker M."/>
            <person name="Woyke T."/>
            <person name="Wu Q.L."/>
            <person name="Pockl M."/>
            <person name="Hahn M.W."/>
            <person name="Klenk H.P."/>
        </authorList>
    </citation>
    <scope>NUCLEOTIDE SEQUENCE [LARGE SCALE GENOMIC DNA]</scope>
    <source>
        <strain>DSM 18221 / CIP 109841 / QLW-P1DMWA-1</strain>
    </source>
</reference>